<evidence type="ECO:0000255" key="1">
    <source>
        <dbReference type="HAMAP-Rule" id="MF_00736"/>
    </source>
</evidence>
<evidence type="ECO:0000305" key="2"/>
<comment type="function">
    <text evidence="1">Forms part of the ribosomal stalk which helps the ribosome interact with GTP-bound translation factors.</text>
</comment>
<comment type="subunit">
    <text evidence="1">Part of the ribosomal stalk of the 50S ribosomal subunit. Interacts with L10 and the large rRNA to form the base of the stalk. L10 forms an elongated spine to which L12 dimers bind in a sequential fashion forming a multimeric L10(L12)X complex.</text>
</comment>
<comment type="PTM">
    <text evidence="1">One or more lysine residues are methylated.</text>
</comment>
<comment type="similarity">
    <text evidence="1">Belongs to the universal ribosomal protein uL11 family.</text>
</comment>
<keyword id="KW-0488">Methylation</keyword>
<keyword id="KW-0687">Ribonucleoprotein</keyword>
<keyword id="KW-0689">Ribosomal protein</keyword>
<keyword id="KW-0694">RNA-binding</keyword>
<keyword id="KW-0699">rRNA-binding</keyword>
<feature type="chain" id="PRO_1000046182" description="Large ribosomal subunit protein uL11">
    <location>
        <begin position="1"/>
        <end position="144"/>
    </location>
</feature>
<organism>
    <name type="scientific">Francisella tularensis subsp. tularensis (strain WY96-3418)</name>
    <dbReference type="NCBI Taxonomy" id="418136"/>
    <lineage>
        <taxon>Bacteria</taxon>
        <taxon>Pseudomonadati</taxon>
        <taxon>Pseudomonadota</taxon>
        <taxon>Gammaproteobacteria</taxon>
        <taxon>Thiotrichales</taxon>
        <taxon>Francisellaceae</taxon>
        <taxon>Francisella</taxon>
    </lineage>
</organism>
<sequence>MAKKKIEAIIKLQVAAGKANPSPPIGPALGQHGVNIMGFCKEFNAKTQGMEPGMPIPVEISVYSDRSFTFEMKTPPASYLIKKAINVKSGSSKPSKEFVGTITRAQLEEIAKVKDPDLTAADLDAAVRIIAGSARSMGVKVEGV</sequence>
<reference key="1">
    <citation type="journal article" date="2007" name="PLoS ONE">
        <title>Complete genomic characterization of a pathogenic A.II strain of Francisella tularensis subspecies tularensis.</title>
        <authorList>
            <person name="Beckstrom-Sternberg S.M."/>
            <person name="Auerbach R.K."/>
            <person name="Godbole S."/>
            <person name="Pearson J.V."/>
            <person name="Beckstrom-Sternberg J.S."/>
            <person name="Deng Z."/>
            <person name="Munk C."/>
            <person name="Kubota K."/>
            <person name="Zhou Y."/>
            <person name="Bruce D."/>
            <person name="Noronha J."/>
            <person name="Scheuermann R.H."/>
            <person name="Wang A."/>
            <person name="Wei X."/>
            <person name="Wang J."/>
            <person name="Hao J."/>
            <person name="Wagner D.M."/>
            <person name="Brettin T.S."/>
            <person name="Brown N."/>
            <person name="Gilna P."/>
            <person name="Keim P.S."/>
        </authorList>
    </citation>
    <scope>NUCLEOTIDE SEQUENCE [LARGE SCALE GENOMIC DNA]</scope>
    <source>
        <strain>WY96-3418</strain>
    </source>
</reference>
<protein>
    <recommendedName>
        <fullName evidence="1">Large ribosomal subunit protein uL11</fullName>
    </recommendedName>
    <alternativeName>
        <fullName evidence="2">50S ribosomal protein L11</fullName>
    </alternativeName>
</protein>
<name>RL11_FRATW</name>
<dbReference type="EMBL" id="CP000608">
    <property type="protein sequence ID" value="ABO46197.1"/>
    <property type="molecule type" value="Genomic_DNA"/>
</dbReference>
<dbReference type="RefSeq" id="WP_003024803.1">
    <property type="nucleotide sequence ID" value="NC_009257.1"/>
</dbReference>
<dbReference type="SMR" id="A4IW95"/>
<dbReference type="GeneID" id="75264696"/>
<dbReference type="KEGG" id="ftw:FTW_0230"/>
<dbReference type="HOGENOM" id="CLU_074237_2_0_6"/>
<dbReference type="GO" id="GO:0022625">
    <property type="term" value="C:cytosolic large ribosomal subunit"/>
    <property type="evidence" value="ECO:0007669"/>
    <property type="project" value="TreeGrafter"/>
</dbReference>
<dbReference type="GO" id="GO:0070180">
    <property type="term" value="F:large ribosomal subunit rRNA binding"/>
    <property type="evidence" value="ECO:0007669"/>
    <property type="project" value="UniProtKB-UniRule"/>
</dbReference>
<dbReference type="GO" id="GO:0003735">
    <property type="term" value="F:structural constituent of ribosome"/>
    <property type="evidence" value="ECO:0007669"/>
    <property type="project" value="InterPro"/>
</dbReference>
<dbReference type="GO" id="GO:0006412">
    <property type="term" value="P:translation"/>
    <property type="evidence" value="ECO:0007669"/>
    <property type="project" value="UniProtKB-UniRule"/>
</dbReference>
<dbReference type="CDD" id="cd00349">
    <property type="entry name" value="Ribosomal_L11"/>
    <property type="match status" value="1"/>
</dbReference>
<dbReference type="FunFam" id="1.10.10.250:FF:000001">
    <property type="entry name" value="50S ribosomal protein L11"/>
    <property type="match status" value="1"/>
</dbReference>
<dbReference type="FunFam" id="3.30.1550.10:FF:000001">
    <property type="entry name" value="50S ribosomal protein L11"/>
    <property type="match status" value="1"/>
</dbReference>
<dbReference type="Gene3D" id="1.10.10.250">
    <property type="entry name" value="Ribosomal protein L11, C-terminal domain"/>
    <property type="match status" value="1"/>
</dbReference>
<dbReference type="Gene3D" id="3.30.1550.10">
    <property type="entry name" value="Ribosomal protein L11/L12, N-terminal domain"/>
    <property type="match status" value="1"/>
</dbReference>
<dbReference type="HAMAP" id="MF_00736">
    <property type="entry name" value="Ribosomal_uL11"/>
    <property type="match status" value="1"/>
</dbReference>
<dbReference type="InterPro" id="IPR000911">
    <property type="entry name" value="Ribosomal_uL11"/>
</dbReference>
<dbReference type="InterPro" id="IPR006519">
    <property type="entry name" value="Ribosomal_uL11_bac-typ"/>
</dbReference>
<dbReference type="InterPro" id="IPR020783">
    <property type="entry name" value="Ribosomal_uL11_C"/>
</dbReference>
<dbReference type="InterPro" id="IPR036769">
    <property type="entry name" value="Ribosomal_uL11_C_sf"/>
</dbReference>
<dbReference type="InterPro" id="IPR020785">
    <property type="entry name" value="Ribosomal_uL11_CS"/>
</dbReference>
<dbReference type="InterPro" id="IPR020784">
    <property type="entry name" value="Ribosomal_uL11_N"/>
</dbReference>
<dbReference type="InterPro" id="IPR036796">
    <property type="entry name" value="Ribosomal_uL11_N_sf"/>
</dbReference>
<dbReference type="NCBIfam" id="TIGR01632">
    <property type="entry name" value="L11_bact"/>
    <property type="match status" value="1"/>
</dbReference>
<dbReference type="PANTHER" id="PTHR11661">
    <property type="entry name" value="60S RIBOSOMAL PROTEIN L12"/>
    <property type="match status" value="1"/>
</dbReference>
<dbReference type="PANTHER" id="PTHR11661:SF1">
    <property type="entry name" value="LARGE RIBOSOMAL SUBUNIT PROTEIN UL11M"/>
    <property type="match status" value="1"/>
</dbReference>
<dbReference type="Pfam" id="PF00298">
    <property type="entry name" value="Ribosomal_L11"/>
    <property type="match status" value="1"/>
</dbReference>
<dbReference type="Pfam" id="PF03946">
    <property type="entry name" value="Ribosomal_L11_N"/>
    <property type="match status" value="1"/>
</dbReference>
<dbReference type="SMART" id="SM00649">
    <property type="entry name" value="RL11"/>
    <property type="match status" value="1"/>
</dbReference>
<dbReference type="SUPFAM" id="SSF54747">
    <property type="entry name" value="Ribosomal L11/L12e N-terminal domain"/>
    <property type="match status" value="1"/>
</dbReference>
<dbReference type="SUPFAM" id="SSF46906">
    <property type="entry name" value="Ribosomal protein L11, C-terminal domain"/>
    <property type="match status" value="1"/>
</dbReference>
<dbReference type="PROSITE" id="PS00359">
    <property type="entry name" value="RIBOSOMAL_L11"/>
    <property type="match status" value="1"/>
</dbReference>
<gene>
    <name evidence="1" type="primary">rplK</name>
    <name type="ordered locus">FTW_0230</name>
</gene>
<accession>A4IW95</accession>
<proteinExistence type="inferred from homology"/>